<reference key="1">
    <citation type="journal article" date="1994" name="J. Bacteriol.">
        <title>Molecular characterization of enterobacterial pldA genes encoding outer membrane phospholipase A.</title>
        <authorList>
            <person name="Brok R.G.P.M."/>
            <person name="Brinkman E."/>
            <person name="van Boxtel R."/>
            <person name="Bekkers A.C.A.P."/>
            <person name="Verheij H.M."/>
            <person name="Tommassen J."/>
        </authorList>
    </citation>
    <scope>NUCLEOTIDE SEQUENCE [GENOMIC DNA]</scope>
</reference>
<keyword id="KW-0106">Calcium</keyword>
<keyword id="KW-0998">Cell outer membrane</keyword>
<keyword id="KW-0378">Hydrolase</keyword>
<keyword id="KW-0442">Lipid degradation</keyword>
<keyword id="KW-0443">Lipid metabolism</keyword>
<keyword id="KW-0472">Membrane</keyword>
<keyword id="KW-0479">Metal-binding</keyword>
<keyword id="KW-0732">Signal</keyword>
<keyword id="KW-0812">Transmembrane</keyword>
<keyword id="KW-1134">Transmembrane beta strand</keyword>
<organism>
    <name type="scientific">Klebsiella pneumoniae</name>
    <dbReference type="NCBI Taxonomy" id="573"/>
    <lineage>
        <taxon>Bacteria</taxon>
        <taxon>Pseudomonadati</taxon>
        <taxon>Pseudomonadota</taxon>
        <taxon>Gammaproteobacteria</taxon>
        <taxon>Enterobacterales</taxon>
        <taxon>Enterobacteriaceae</taxon>
        <taxon>Klebsiella/Raoultella group</taxon>
        <taxon>Klebsiella</taxon>
        <taxon>Klebsiella pneumoniae complex</taxon>
    </lineage>
</organism>
<comment type="function">
    <text evidence="1">Hydrolysis of phosphatidylcholine with phospholipase A2 (EC 3.1.1.4) and phospholipase A1 (EC 3.1.1.32) activities.</text>
</comment>
<comment type="catalytic activity">
    <reaction>
        <text>a 1,2-diacyl-sn-glycero-3-phosphocholine + H2O = a 2-acyl-sn-glycero-3-phosphocholine + a fatty acid + H(+)</text>
        <dbReference type="Rhea" id="RHEA:18689"/>
        <dbReference type="ChEBI" id="CHEBI:15377"/>
        <dbReference type="ChEBI" id="CHEBI:15378"/>
        <dbReference type="ChEBI" id="CHEBI:28868"/>
        <dbReference type="ChEBI" id="CHEBI:57643"/>
        <dbReference type="ChEBI" id="CHEBI:57875"/>
        <dbReference type="EC" id="3.1.1.32"/>
    </reaction>
</comment>
<comment type="catalytic activity">
    <reaction>
        <text>a 1,2-diacyl-sn-glycero-3-phosphocholine + H2O = a 1-acyl-sn-glycero-3-phosphocholine + a fatty acid + H(+)</text>
        <dbReference type="Rhea" id="RHEA:15801"/>
        <dbReference type="ChEBI" id="CHEBI:15377"/>
        <dbReference type="ChEBI" id="CHEBI:15378"/>
        <dbReference type="ChEBI" id="CHEBI:28868"/>
        <dbReference type="ChEBI" id="CHEBI:57643"/>
        <dbReference type="ChEBI" id="CHEBI:58168"/>
        <dbReference type="EC" id="3.1.1.4"/>
    </reaction>
</comment>
<comment type="cofactor">
    <cofactor evidence="1">
        <name>Ca(2+)</name>
        <dbReference type="ChEBI" id="CHEBI:29108"/>
    </cofactor>
    <text evidence="1">Binds 1 Ca(2+) ion per monomer. In the dimeric form the Ca(2+) is bound by different amino acids with binding of each Ca(2+) shared with ligands coming from each monomer. The Ca(2+) ion may have a role in catalysis.</text>
</comment>
<comment type="subunit">
    <text evidence="1">Homodimer; dimerization is reversible, and the dimeric form is the active one.</text>
</comment>
<comment type="subcellular location">
    <subcellularLocation>
        <location evidence="1">Cell outer membrane</location>
        <topology evidence="1">Multi-pass membrane protein</topology>
    </subcellularLocation>
    <text evidence="1">One of the very few enzymes located there.</text>
</comment>
<comment type="similarity">
    <text evidence="2">Belongs to the phospholipase A1 family.</text>
</comment>
<feature type="signal peptide" evidence="1">
    <location>
        <begin position="1"/>
        <end position="20"/>
    </location>
</feature>
<feature type="chain" id="PRO_0000021986" description="Phospholipase A1">
    <location>
        <begin position="21"/>
        <end position="286"/>
    </location>
</feature>
<feature type="topological domain" description="Periplasmic" evidence="1">
    <location>
        <begin position="21"/>
        <end position="49"/>
    </location>
</feature>
<feature type="transmembrane region" description="Beta stranded" evidence="1">
    <location>
        <begin position="50"/>
        <end position="62"/>
    </location>
</feature>
<feature type="topological domain" description="Extracellular" evidence="1">
    <location>
        <begin position="63"/>
        <end position="81"/>
    </location>
</feature>
<feature type="transmembrane region" description="Beta stranded" evidence="1">
    <location>
        <begin position="82"/>
        <end position="96"/>
    </location>
</feature>
<feature type="topological domain" description="Periplasmic" evidence="1">
    <location>
        <begin position="97"/>
        <end position="102"/>
    </location>
</feature>
<feature type="transmembrane region" description="Beta stranded" evidence="1">
    <location>
        <begin position="103"/>
        <end position="115"/>
    </location>
</feature>
<feature type="topological domain" description="Extracellular" evidence="1">
    <location>
        <begin position="116"/>
        <end position="125"/>
    </location>
</feature>
<feature type="transmembrane region" description="Beta stranded" evidence="1">
    <location>
        <begin position="126"/>
        <end position="145"/>
    </location>
</feature>
<feature type="topological domain" description="Periplasmic" evidence="1">
    <location>
        <begin position="146"/>
        <end position="147"/>
    </location>
</feature>
<feature type="transmembrane region" description="Beta stranded" evidence="1">
    <location>
        <begin position="148"/>
        <end position="161"/>
    </location>
</feature>
<feature type="topological domain" description="Extracellular" evidence="1">
    <location>
        <begin position="162"/>
        <end position="170"/>
    </location>
</feature>
<feature type="transmembrane region" description="Beta stranded" evidence="1">
    <location>
        <begin position="171"/>
        <end position="183"/>
    </location>
</feature>
<feature type="topological domain" description="Periplasmic" evidence="1">
    <location>
        <begin position="184"/>
        <end position="185"/>
    </location>
</feature>
<feature type="transmembrane region" description="Beta stranded" evidence="1">
    <location>
        <begin position="186"/>
        <end position="195"/>
    </location>
</feature>
<feature type="topological domain" description="Extracellular" evidence="1">
    <location>
        <begin position="196"/>
        <end position="213"/>
    </location>
</feature>
<feature type="transmembrane region" description="Beta stranded" evidence="1">
    <location>
        <begin position="214"/>
        <end position="220"/>
    </location>
</feature>
<feature type="topological domain" description="Periplasmic" evidence="1">
    <location>
        <begin position="221"/>
        <end position="222"/>
    </location>
</feature>
<feature type="transmembrane region" description="Beta stranded" evidence="1">
    <location>
        <begin position="223"/>
        <end position="231"/>
    </location>
</feature>
<feature type="topological domain" description="Extracellular" evidence="1">
    <location>
        <begin position="232"/>
        <end position="238"/>
    </location>
</feature>
<feature type="transmembrane region" description="Beta stranded" evidence="1">
    <location>
        <begin position="239"/>
        <end position="247"/>
    </location>
</feature>
<feature type="topological domain" description="Periplasmic" evidence="1">
    <location>
        <begin position="248"/>
        <end position="252"/>
    </location>
</feature>
<feature type="transmembrane region" description="Beta stranded" evidence="1">
    <location>
        <begin position="253"/>
        <end position="262"/>
    </location>
</feature>
<feature type="topological domain" description="Extracellular" evidence="1">
    <location>
        <begin position="263"/>
        <end position="271"/>
    </location>
</feature>
<feature type="transmembrane region" description="Beta stranded" evidence="1">
    <location>
        <begin position="272"/>
        <end position="283"/>
    </location>
</feature>
<feature type="topological domain" description="Periplasmic" evidence="1">
    <location>
        <begin position="284"/>
        <end position="286"/>
    </location>
</feature>
<feature type="active site" description="Proton acceptor" evidence="1">
    <location>
        <position position="159"/>
    </location>
</feature>
<feature type="active site" description="Nucleophile" evidence="1">
    <location>
        <position position="161"/>
    </location>
</feature>
<feature type="binding site" description="in dimeric form" evidence="1">
    <location>
        <position position="123"/>
    </location>
    <ligand>
        <name>Ca(2+)</name>
        <dbReference type="ChEBI" id="CHEBI:29108"/>
        <label>1</label>
    </ligand>
</feature>
<feature type="binding site" description="in dimeric form" evidence="1">
    <location>
        <position position="164"/>
    </location>
    <ligand>
        <name>Ca(2+)</name>
        <dbReference type="ChEBI" id="CHEBI:29108"/>
        <label>2</label>
    </ligand>
</feature>
<feature type="binding site" description="in dimeric form" evidence="1">
    <location>
        <position position="169"/>
    </location>
    <ligand>
        <name>Ca(2+)</name>
        <dbReference type="ChEBI" id="CHEBI:29108"/>
        <label>2</label>
    </ligand>
</feature>
<feature type="binding site" description="in monomeric form" evidence="1">
    <location>
        <position position="201"/>
    </location>
    <ligand>
        <name>Ca(2+)</name>
        <dbReference type="ChEBI" id="CHEBI:29108"/>
        <label>3</label>
    </ligand>
</feature>
<sequence>MRISLACLAALCALPAGVMAQDASVHDKPAVRGSIIANLLQDHDNPFLLYPYESNYLLYTWTSDLNKEAIRSYDWAENARKDEVKFQLSLAFPLWRGILGDNSLLGASYTQKSWWQLSNSKESAPFRETNYEPQLFLGFATDYQFAGWTLRDIEMGYNHDSNGRSDPTSRSWNRLYARLMAQNGNWLVEVKPWYVVGSTDDNPDITKYMGYYRLKVGYQLGEAILSAQGQYNWNTGYGGAELGVSYPITKHVRAYTQIYSGYGESLIDYNFNQTRVGVGLMLNDLF</sequence>
<protein>
    <recommendedName>
        <fullName>Phospholipase A1</fullName>
        <ecNumber>3.1.1.32</ecNumber>
        <ecNumber>3.1.1.4</ecNumber>
    </recommendedName>
    <alternativeName>
        <fullName>Detergent-resistant phospholipase A</fullName>
        <shortName>DR-phospholipase A</shortName>
    </alternativeName>
    <alternativeName>
        <fullName>Outer membrane phospholipase A</fullName>
        <shortName>OM PLA</shortName>
    </alternativeName>
    <alternativeName>
        <fullName>Phosphatidylcholine 1-acylhydrolase</fullName>
    </alternativeName>
</protein>
<gene>
    <name type="primary">pldA</name>
</gene>
<proteinExistence type="inferred from homology"/>
<evidence type="ECO:0000250" key="1"/>
<evidence type="ECO:0000305" key="2"/>
<accession>P37446</accession>
<dbReference type="EC" id="3.1.1.32"/>
<dbReference type="EC" id="3.1.1.4"/>
<dbReference type="EMBL" id="X76901">
    <property type="protein sequence ID" value="CAA54223.1"/>
    <property type="molecule type" value="Genomic_DNA"/>
</dbReference>
<dbReference type="PIR" id="B36971">
    <property type="entry name" value="B36971"/>
</dbReference>
<dbReference type="RefSeq" id="WP_004886777.1">
    <property type="nucleotide sequence ID" value="NZ_PEHD01000020.1"/>
</dbReference>
<dbReference type="SMR" id="P37446"/>
<dbReference type="GO" id="GO:0009279">
    <property type="term" value="C:cell outer membrane"/>
    <property type="evidence" value="ECO:0007669"/>
    <property type="project" value="UniProtKB-SubCell"/>
</dbReference>
<dbReference type="GO" id="GO:0005509">
    <property type="term" value="F:calcium ion binding"/>
    <property type="evidence" value="ECO:0007669"/>
    <property type="project" value="TreeGrafter"/>
</dbReference>
<dbReference type="GO" id="GO:0008970">
    <property type="term" value="F:phospholipase A1 activity"/>
    <property type="evidence" value="ECO:0007669"/>
    <property type="project" value="UniProtKB-EC"/>
</dbReference>
<dbReference type="GO" id="GO:0004623">
    <property type="term" value="F:phospholipase A2 activity"/>
    <property type="evidence" value="ECO:0007669"/>
    <property type="project" value="UniProtKB-EC"/>
</dbReference>
<dbReference type="GO" id="GO:0016042">
    <property type="term" value="P:lipid catabolic process"/>
    <property type="evidence" value="ECO:0007669"/>
    <property type="project" value="UniProtKB-KW"/>
</dbReference>
<dbReference type="CDD" id="cd00541">
    <property type="entry name" value="OMPLA"/>
    <property type="match status" value="1"/>
</dbReference>
<dbReference type="FunFam" id="2.40.230.10:FF:000001">
    <property type="entry name" value="Phospholipase A(1)"/>
    <property type="match status" value="1"/>
</dbReference>
<dbReference type="Gene3D" id="2.40.230.10">
    <property type="entry name" value="Phospholipase A1"/>
    <property type="match status" value="1"/>
</dbReference>
<dbReference type="InterPro" id="IPR003187">
    <property type="entry name" value="PLipase_A1"/>
</dbReference>
<dbReference type="InterPro" id="IPR036541">
    <property type="entry name" value="PLipase_A1_sf"/>
</dbReference>
<dbReference type="NCBIfam" id="NF008031">
    <property type="entry name" value="PRK10763.1"/>
    <property type="match status" value="1"/>
</dbReference>
<dbReference type="PANTHER" id="PTHR40457">
    <property type="entry name" value="PHOSPHOLIPASE A1"/>
    <property type="match status" value="1"/>
</dbReference>
<dbReference type="PANTHER" id="PTHR40457:SF1">
    <property type="entry name" value="PHOSPHOLIPASE A1"/>
    <property type="match status" value="1"/>
</dbReference>
<dbReference type="Pfam" id="PF02253">
    <property type="entry name" value="PLA1"/>
    <property type="match status" value="1"/>
</dbReference>
<dbReference type="PRINTS" id="PR01486">
    <property type="entry name" value="PHPHLIPASEA1"/>
</dbReference>
<dbReference type="SUPFAM" id="SSF56931">
    <property type="entry name" value="Outer membrane phospholipase A (OMPLA)"/>
    <property type="match status" value="1"/>
</dbReference>
<name>PA1_KLEPN</name>